<comment type="function">
    <text evidence="1">Catalyzes the conversion of acetate into acetyl-CoA (AcCoA), an essential intermediate at the junction of anabolic and catabolic pathways. AcsA undergoes a two-step reaction. In the first half reaction, AcsA combines acetate with ATP to form acetyl-adenylate (AcAMP) intermediate. In the second half reaction, it can then transfer the acetyl group from AcAMP to the sulfhydryl group of CoA, forming the product AcCoA.</text>
</comment>
<comment type="catalytic activity">
    <reaction evidence="1">
        <text>acetate + ATP + CoA = acetyl-CoA + AMP + diphosphate</text>
        <dbReference type="Rhea" id="RHEA:23176"/>
        <dbReference type="ChEBI" id="CHEBI:30089"/>
        <dbReference type="ChEBI" id="CHEBI:30616"/>
        <dbReference type="ChEBI" id="CHEBI:33019"/>
        <dbReference type="ChEBI" id="CHEBI:57287"/>
        <dbReference type="ChEBI" id="CHEBI:57288"/>
        <dbReference type="ChEBI" id="CHEBI:456215"/>
        <dbReference type="EC" id="6.2.1.1"/>
    </reaction>
</comment>
<comment type="cofactor">
    <cofactor evidence="1">
        <name>Mg(2+)</name>
        <dbReference type="ChEBI" id="CHEBI:18420"/>
    </cofactor>
</comment>
<comment type="PTM">
    <text evidence="1">Acetylated. Deacetylation by the SIR2-homolog deacetylase activates the enzyme.</text>
</comment>
<comment type="similarity">
    <text evidence="1">Belongs to the ATP-dependent AMP-binding enzyme family.</text>
</comment>
<proteinExistence type="inferred from homology"/>
<sequence>MPNSEEVMAKERVVSPSAEFKKNANISLKNYKSLYKESIENPNKFWAREANRLIWFKKWTKVLSHDFKNAKVEWFKGGKLNVSYNCLDRHISTPLKNKAALIWEGDNPTESRVLTYYDVYREVNRFANILKKFGVKKGDRVLVYLPMIPELAITILACTRIGAIHSVVFGGFSPEALQSRIDDCKPKLVVTADGGFRGGKPIELKKNVDLALEKSKEKVKTVIVVRRTGNESGLTWKDGQDYWYHFLMNDPELSAYCKPEEMDAEDPLFILYTSGSTGKPKGVLHTTGGYLLGANLTFHYVFDIKPEDTYWCTADIGWVTGHSYLVYGPLSNGASSVMFEGVPSYPDAGRFWDVIDKYGVNIFYTAPTAIRALMREGLNHIQKRDLSSLRLLGSVGEPINPEAWEWYFKNIGKGKCPIVDTWWQTETGSIMITALPGAIPQKPGSATLPFFGVQPVLVDNDGKEITDKGEVSGNLCIKGPWPSMMRGVYGDPKRFFETYFSQFKGYYFTGDGARRDKDGYFWITGRVDDVINVSGHRIGSAEVESALVENKSVAEAAVVGFPHDIKGQGIYAYVTVKEGVTTNDVLKKELISTVEKMIGKIARPDVIHWAPGLPKTRSGKIMRRILRKIASGEFEGLGDTSTLADPSVVQKLIEDKKKFHS</sequence>
<reference key="1">
    <citation type="journal article" date="2004" name="J. Bacteriol.">
        <title>Comparative genomics of two Leptospira interrogans serovars reveals novel insights into physiology and pathogenesis.</title>
        <authorList>
            <person name="Nascimento A.L.T.O."/>
            <person name="Ko A.I."/>
            <person name="Martins E.A.L."/>
            <person name="Monteiro-Vitorello C.B."/>
            <person name="Ho P.L."/>
            <person name="Haake D.A."/>
            <person name="Verjovski-Almeida S."/>
            <person name="Hartskeerl R.A."/>
            <person name="Marques M.V."/>
            <person name="Oliveira M.C."/>
            <person name="Menck C.F.M."/>
            <person name="Leite L.C.C."/>
            <person name="Carrer H."/>
            <person name="Coutinho L.L."/>
            <person name="Degrave W.M."/>
            <person name="Dellagostin O.A."/>
            <person name="El-Dorry H."/>
            <person name="Ferro E.S."/>
            <person name="Ferro M.I.T."/>
            <person name="Furlan L.R."/>
            <person name="Gamberini M."/>
            <person name="Giglioti E.A."/>
            <person name="Goes-Neto A."/>
            <person name="Goldman G.H."/>
            <person name="Goldman M.H.S."/>
            <person name="Harakava R."/>
            <person name="Jeronimo S.M.B."/>
            <person name="Junqueira-de-Azevedo I.L.M."/>
            <person name="Kimura E.T."/>
            <person name="Kuramae E.E."/>
            <person name="Lemos E.G.M."/>
            <person name="Lemos M.V.F."/>
            <person name="Marino C.L."/>
            <person name="Nunes L.R."/>
            <person name="de Oliveira R.C."/>
            <person name="Pereira G.G."/>
            <person name="Reis M.S."/>
            <person name="Schriefer A."/>
            <person name="Siqueira W.J."/>
            <person name="Sommer P."/>
            <person name="Tsai S.M."/>
            <person name="Simpson A.J.G."/>
            <person name="Ferro J.A."/>
            <person name="Camargo L.E.A."/>
            <person name="Kitajima J.P."/>
            <person name="Setubal J.C."/>
            <person name="Van Sluys M.A."/>
        </authorList>
    </citation>
    <scope>NUCLEOTIDE SEQUENCE [LARGE SCALE GENOMIC DNA]</scope>
    <source>
        <strain>Fiocruz L1-130</strain>
    </source>
</reference>
<protein>
    <recommendedName>
        <fullName evidence="1">Acetyl-coenzyme A synthetase</fullName>
        <shortName evidence="1">AcCoA synthetase</shortName>
        <shortName evidence="1">Acs</shortName>
        <ecNumber evidence="1">6.2.1.1</ecNumber>
    </recommendedName>
    <alternativeName>
        <fullName evidence="1">Acetate--CoA ligase</fullName>
    </alternativeName>
    <alternativeName>
        <fullName evidence="1">Acyl-activating enzyme</fullName>
    </alternativeName>
</protein>
<organism>
    <name type="scientific">Leptospira interrogans serogroup Icterohaemorrhagiae serovar copenhageni (strain Fiocruz L1-130)</name>
    <dbReference type="NCBI Taxonomy" id="267671"/>
    <lineage>
        <taxon>Bacteria</taxon>
        <taxon>Pseudomonadati</taxon>
        <taxon>Spirochaetota</taxon>
        <taxon>Spirochaetia</taxon>
        <taxon>Leptospirales</taxon>
        <taxon>Leptospiraceae</taxon>
        <taxon>Leptospira</taxon>
    </lineage>
</organism>
<name>ACSA_LEPIC</name>
<accession>Q72LY9</accession>
<evidence type="ECO:0000255" key="1">
    <source>
        <dbReference type="HAMAP-Rule" id="MF_01123"/>
    </source>
</evidence>
<keyword id="KW-0007">Acetylation</keyword>
<keyword id="KW-0067">ATP-binding</keyword>
<keyword id="KW-0436">Ligase</keyword>
<keyword id="KW-0460">Magnesium</keyword>
<keyword id="KW-0479">Metal-binding</keyword>
<keyword id="KW-0547">Nucleotide-binding</keyword>
<dbReference type="EC" id="6.2.1.1" evidence="1"/>
<dbReference type="EMBL" id="AE016823">
    <property type="protein sequence ID" value="AAS71944.1"/>
    <property type="molecule type" value="Genomic_DNA"/>
</dbReference>
<dbReference type="SMR" id="Q72LY9"/>
<dbReference type="KEGG" id="lic:LIC_13404"/>
<dbReference type="HOGENOM" id="CLU_000022_3_6_12"/>
<dbReference type="Proteomes" id="UP000007037">
    <property type="component" value="Chromosome I"/>
</dbReference>
<dbReference type="GO" id="GO:0005829">
    <property type="term" value="C:cytosol"/>
    <property type="evidence" value="ECO:0007669"/>
    <property type="project" value="TreeGrafter"/>
</dbReference>
<dbReference type="GO" id="GO:0003987">
    <property type="term" value="F:acetate-CoA ligase activity"/>
    <property type="evidence" value="ECO:0007669"/>
    <property type="project" value="UniProtKB-UniRule"/>
</dbReference>
<dbReference type="GO" id="GO:0016208">
    <property type="term" value="F:AMP binding"/>
    <property type="evidence" value="ECO:0007669"/>
    <property type="project" value="InterPro"/>
</dbReference>
<dbReference type="GO" id="GO:0005524">
    <property type="term" value="F:ATP binding"/>
    <property type="evidence" value="ECO:0007669"/>
    <property type="project" value="UniProtKB-KW"/>
</dbReference>
<dbReference type="GO" id="GO:0046872">
    <property type="term" value="F:metal ion binding"/>
    <property type="evidence" value="ECO:0007669"/>
    <property type="project" value="UniProtKB-KW"/>
</dbReference>
<dbReference type="GO" id="GO:0019427">
    <property type="term" value="P:acetyl-CoA biosynthetic process from acetate"/>
    <property type="evidence" value="ECO:0007669"/>
    <property type="project" value="InterPro"/>
</dbReference>
<dbReference type="CDD" id="cd05966">
    <property type="entry name" value="ACS"/>
    <property type="match status" value="1"/>
</dbReference>
<dbReference type="FunFam" id="3.30.300.30:FF:000004">
    <property type="entry name" value="Acetyl-coenzyme A synthetase"/>
    <property type="match status" value="1"/>
</dbReference>
<dbReference type="FunFam" id="3.40.50.12780:FF:000001">
    <property type="entry name" value="Acetyl-coenzyme A synthetase"/>
    <property type="match status" value="1"/>
</dbReference>
<dbReference type="Gene3D" id="3.30.300.30">
    <property type="match status" value="1"/>
</dbReference>
<dbReference type="Gene3D" id="3.40.50.12780">
    <property type="entry name" value="N-terminal domain of ligase-like"/>
    <property type="match status" value="1"/>
</dbReference>
<dbReference type="HAMAP" id="MF_01123">
    <property type="entry name" value="Ac_CoA_synth"/>
    <property type="match status" value="1"/>
</dbReference>
<dbReference type="InterPro" id="IPR011904">
    <property type="entry name" value="Ac_CoA_lig"/>
</dbReference>
<dbReference type="InterPro" id="IPR032387">
    <property type="entry name" value="ACAS_N"/>
</dbReference>
<dbReference type="InterPro" id="IPR025110">
    <property type="entry name" value="AMP-bd_C"/>
</dbReference>
<dbReference type="InterPro" id="IPR045851">
    <property type="entry name" value="AMP-bd_C_sf"/>
</dbReference>
<dbReference type="InterPro" id="IPR020845">
    <property type="entry name" value="AMP-binding_CS"/>
</dbReference>
<dbReference type="InterPro" id="IPR000873">
    <property type="entry name" value="AMP-dep_synth/lig_dom"/>
</dbReference>
<dbReference type="InterPro" id="IPR042099">
    <property type="entry name" value="ANL_N_sf"/>
</dbReference>
<dbReference type="NCBIfam" id="TIGR02188">
    <property type="entry name" value="Ac_CoA_lig_AcsA"/>
    <property type="match status" value="1"/>
</dbReference>
<dbReference type="NCBIfam" id="NF001208">
    <property type="entry name" value="PRK00174.1"/>
    <property type="match status" value="1"/>
</dbReference>
<dbReference type="PANTHER" id="PTHR24095">
    <property type="entry name" value="ACETYL-COENZYME A SYNTHETASE"/>
    <property type="match status" value="1"/>
</dbReference>
<dbReference type="PANTHER" id="PTHR24095:SF14">
    <property type="entry name" value="ACETYL-COENZYME A SYNTHETASE 1"/>
    <property type="match status" value="1"/>
</dbReference>
<dbReference type="Pfam" id="PF16177">
    <property type="entry name" value="ACAS_N"/>
    <property type="match status" value="1"/>
</dbReference>
<dbReference type="Pfam" id="PF00501">
    <property type="entry name" value="AMP-binding"/>
    <property type="match status" value="1"/>
</dbReference>
<dbReference type="Pfam" id="PF13193">
    <property type="entry name" value="AMP-binding_C"/>
    <property type="match status" value="1"/>
</dbReference>
<dbReference type="SUPFAM" id="SSF56801">
    <property type="entry name" value="Acetyl-CoA synthetase-like"/>
    <property type="match status" value="1"/>
</dbReference>
<dbReference type="PROSITE" id="PS00455">
    <property type="entry name" value="AMP_BINDING"/>
    <property type="match status" value="1"/>
</dbReference>
<feature type="chain" id="PRO_0000208366" description="Acetyl-coenzyme A synthetase">
    <location>
        <begin position="1"/>
        <end position="661"/>
    </location>
</feature>
<feature type="binding site" evidence="1">
    <location>
        <begin position="197"/>
        <end position="200"/>
    </location>
    <ligand>
        <name>CoA</name>
        <dbReference type="ChEBI" id="CHEBI:57287"/>
    </ligand>
</feature>
<feature type="binding site" evidence="1">
    <location>
        <position position="320"/>
    </location>
    <ligand>
        <name>CoA</name>
        <dbReference type="ChEBI" id="CHEBI:57287"/>
    </ligand>
</feature>
<feature type="binding site" evidence="1">
    <location>
        <begin position="396"/>
        <end position="398"/>
    </location>
    <ligand>
        <name>ATP</name>
        <dbReference type="ChEBI" id="CHEBI:30616"/>
    </ligand>
</feature>
<feature type="binding site" evidence="1">
    <location>
        <begin position="420"/>
        <end position="425"/>
    </location>
    <ligand>
        <name>ATP</name>
        <dbReference type="ChEBI" id="CHEBI:30616"/>
    </ligand>
</feature>
<feature type="binding site" evidence="1">
    <location>
        <position position="511"/>
    </location>
    <ligand>
        <name>ATP</name>
        <dbReference type="ChEBI" id="CHEBI:30616"/>
    </ligand>
</feature>
<feature type="binding site" evidence="1">
    <location>
        <position position="526"/>
    </location>
    <ligand>
        <name>ATP</name>
        <dbReference type="ChEBI" id="CHEBI:30616"/>
    </ligand>
</feature>
<feature type="binding site" evidence="1">
    <location>
        <position position="534"/>
    </location>
    <ligand>
        <name>CoA</name>
        <dbReference type="ChEBI" id="CHEBI:57287"/>
    </ligand>
</feature>
<feature type="binding site" evidence="1">
    <location>
        <position position="537"/>
    </location>
    <ligand>
        <name>ATP</name>
        <dbReference type="ChEBI" id="CHEBI:30616"/>
    </ligand>
</feature>
<feature type="binding site" evidence="1">
    <location>
        <position position="548"/>
    </location>
    <ligand>
        <name>Mg(2+)</name>
        <dbReference type="ChEBI" id="CHEBI:18420"/>
    </ligand>
</feature>
<feature type="binding site" evidence="1">
    <location>
        <position position="553"/>
    </location>
    <ligand>
        <name>Mg(2+)</name>
        <dbReference type="ChEBI" id="CHEBI:18420"/>
    </ligand>
</feature>
<feature type="modified residue" description="N6-acetyllysine" evidence="1">
    <location>
        <position position="620"/>
    </location>
</feature>
<gene>
    <name evidence="1" type="primary">acsA</name>
    <name type="ordered locus">LIC_13404</name>
</gene>